<dbReference type="EC" id="2.5.1.72" evidence="1"/>
<dbReference type="EMBL" id="CP001068">
    <property type="protein sequence ID" value="ACD27842.1"/>
    <property type="molecule type" value="Genomic_DNA"/>
</dbReference>
<dbReference type="SMR" id="B2UAP5"/>
<dbReference type="STRING" id="402626.Rpic_2717"/>
<dbReference type="KEGG" id="rpi:Rpic_2717"/>
<dbReference type="PATRIC" id="fig|402626.5.peg.3853"/>
<dbReference type="eggNOG" id="COG0379">
    <property type="taxonomic scope" value="Bacteria"/>
</dbReference>
<dbReference type="HOGENOM" id="CLU_047382_1_0_4"/>
<dbReference type="UniPathway" id="UPA00253">
    <property type="reaction ID" value="UER00327"/>
</dbReference>
<dbReference type="GO" id="GO:0005829">
    <property type="term" value="C:cytosol"/>
    <property type="evidence" value="ECO:0007669"/>
    <property type="project" value="TreeGrafter"/>
</dbReference>
<dbReference type="GO" id="GO:0051539">
    <property type="term" value="F:4 iron, 4 sulfur cluster binding"/>
    <property type="evidence" value="ECO:0007669"/>
    <property type="project" value="UniProtKB-KW"/>
</dbReference>
<dbReference type="GO" id="GO:0046872">
    <property type="term" value="F:metal ion binding"/>
    <property type="evidence" value="ECO:0007669"/>
    <property type="project" value="UniProtKB-KW"/>
</dbReference>
<dbReference type="GO" id="GO:0008987">
    <property type="term" value="F:quinolinate synthetase A activity"/>
    <property type="evidence" value="ECO:0007669"/>
    <property type="project" value="UniProtKB-UniRule"/>
</dbReference>
<dbReference type="GO" id="GO:0034628">
    <property type="term" value="P:'de novo' NAD biosynthetic process from L-aspartate"/>
    <property type="evidence" value="ECO:0007669"/>
    <property type="project" value="TreeGrafter"/>
</dbReference>
<dbReference type="FunFam" id="3.40.50.10800:FF:000001">
    <property type="entry name" value="Quinolinate synthase A"/>
    <property type="match status" value="1"/>
</dbReference>
<dbReference type="FunFam" id="3.40.50.10800:FF:000003">
    <property type="entry name" value="Quinolinate synthase A"/>
    <property type="match status" value="1"/>
</dbReference>
<dbReference type="Gene3D" id="3.40.50.10800">
    <property type="entry name" value="NadA-like"/>
    <property type="match status" value="3"/>
</dbReference>
<dbReference type="HAMAP" id="MF_00567">
    <property type="entry name" value="NadA_type1"/>
    <property type="match status" value="1"/>
</dbReference>
<dbReference type="InterPro" id="IPR003473">
    <property type="entry name" value="NadA"/>
</dbReference>
<dbReference type="InterPro" id="IPR036094">
    <property type="entry name" value="NadA_sf"/>
</dbReference>
<dbReference type="InterPro" id="IPR023513">
    <property type="entry name" value="Quinolinate_synth_A_type1"/>
</dbReference>
<dbReference type="NCBIfam" id="TIGR00550">
    <property type="entry name" value="nadA"/>
    <property type="match status" value="1"/>
</dbReference>
<dbReference type="NCBIfam" id="NF006877">
    <property type="entry name" value="PRK09375.1-1"/>
    <property type="match status" value="1"/>
</dbReference>
<dbReference type="NCBIfam" id="NF006878">
    <property type="entry name" value="PRK09375.1-2"/>
    <property type="match status" value="1"/>
</dbReference>
<dbReference type="PANTHER" id="PTHR30573:SF0">
    <property type="entry name" value="QUINOLINATE SYNTHASE, CHLOROPLASTIC"/>
    <property type="match status" value="1"/>
</dbReference>
<dbReference type="PANTHER" id="PTHR30573">
    <property type="entry name" value="QUINOLINATE SYNTHETASE A"/>
    <property type="match status" value="1"/>
</dbReference>
<dbReference type="Pfam" id="PF02445">
    <property type="entry name" value="NadA"/>
    <property type="match status" value="1"/>
</dbReference>
<dbReference type="SUPFAM" id="SSF142754">
    <property type="entry name" value="NadA-like"/>
    <property type="match status" value="1"/>
</dbReference>
<organism>
    <name type="scientific">Ralstonia pickettii (strain 12J)</name>
    <dbReference type="NCBI Taxonomy" id="402626"/>
    <lineage>
        <taxon>Bacteria</taxon>
        <taxon>Pseudomonadati</taxon>
        <taxon>Pseudomonadota</taxon>
        <taxon>Betaproteobacteria</taxon>
        <taxon>Burkholderiales</taxon>
        <taxon>Burkholderiaceae</taxon>
        <taxon>Ralstonia</taxon>
    </lineage>
</organism>
<evidence type="ECO:0000255" key="1">
    <source>
        <dbReference type="HAMAP-Rule" id="MF_00567"/>
    </source>
</evidence>
<accession>B2UAP5</accession>
<sequence>METHIKTVEFERPDMLSEAQSGASCVAHAWAKVPPVLSREERDELKARIKRLLKEREAVLVAHYYVDADLQDLAEETGGCVSDSLEMARFGRDHSAKTLIVAGVRFMGETAKILSPEKTVLMPDLDATCSLDLGCPPDEFAAFCDAHPDRTVVVYANTSAAVKARADWMVTSSIGLKIVQHLHAQGKKILWAPDRHLGSYIQKQTGADMLMWQGSCLVHDEFKGVELDLLRAEHPNAKILVHPESPESVVAQADVVGSTSQLIAAAQSLSAQEFIVATDNGILHKMRMAAPGKRFIEAPTAGNAATCKSCAHCPWMAMNALTNLAEVLETGRNEIHVDPAIGRQAVVCIDRMLDFAAREKATVRPQGDLAANAQLFQGIGPA</sequence>
<proteinExistence type="inferred from homology"/>
<gene>
    <name evidence="1" type="primary">nadA</name>
    <name type="ordered locus">Rpic_2717</name>
</gene>
<name>NADA_RALPJ</name>
<protein>
    <recommendedName>
        <fullName evidence="1">Quinolinate synthase</fullName>
        <ecNumber evidence="1">2.5.1.72</ecNumber>
    </recommendedName>
</protein>
<comment type="function">
    <text evidence="1">Catalyzes the condensation of iminoaspartate with dihydroxyacetone phosphate to form quinolinate.</text>
</comment>
<comment type="catalytic activity">
    <reaction evidence="1">
        <text>iminosuccinate + dihydroxyacetone phosphate = quinolinate + phosphate + 2 H2O + H(+)</text>
        <dbReference type="Rhea" id="RHEA:25888"/>
        <dbReference type="ChEBI" id="CHEBI:15377"/>
        <dbReference type="ChEBI" id="CHEBI:15378"/>
        <dbReference type="ChEBI" id="CHEBI:29959"/>
        <dbReference type="ChEBI" id="CHEBI:43474"/>
        <dbReference type="ChEBI" id="CHEBI:57642"/>
        <dbReference type="ChEBI" id="CHEBI:77875"/>
        <dbReference type="EC" id="2.5.1.72"/>
    </reaction>
    <physiologicalReaction direction="left-to-right" evidence="1">
        <dbReference type="Rhea" id="RHEA:25889"/>
    </physiologicalReaction>
</comment>
<comment type="cofactor">
    <cofactor evidence="1">
        <name>[4Fe-4S] cluster</name>
        <dbReference type="ChEBI" id="CHEBI:49883"/>
    </cofactor>
    <text evidence="1">Binds 1 [4Fe-4S] cluster per subunit.</text>
</comment>
<comment type="pathway">
    <text evidence="1">Cofactor biosynthesis; NAD(+) biosynthesis; quinolinate from iminoaspartate: step 1/1.</text>
</comment>
<comment type="subcellular location">
    <subcellularLocation>
        <location evidence="1">Cytoplasm</location>
    </subcellularLocation>
</comment>
<comment type="similarity">
    <text evidence="1">Belongs to the quinolinate synthase family. Type 1 subfamily.</text>
</comment>
<feature type="chain" id="PRO_1000129421" description="Quinolinate synthase">
    <location>
        <begin position="1"/>
        <end position="382"/>
    </location>
</feature>
<feature type="binding site" evidence="1">
    <location>
        <position position="63"/>
    </location>
    <ligand>
        <name>iminosuccinate</name>
        <dbReference type="ChEBI" id="CHEBI:77875"/>
    </ligand>
</feature>
<feature type="binding site" evidence="1">
    <location>
        <position position="84"/>
    </location>
    <ligand>
        <name>iminosuccinate</name>
        <dbReference type="ChEBI" id="CHEBI:77875"/>
    </ligand>
</feature>
<feature type="binding site" evidence="1">
    <location>
        <position position="129"/>
    </location>
    <ligand>
        <name>[4Fe-4S] cluster</name>
        <dbReference type="ChEBI" id="CHEBI:49883"/>
    </ligand>
</feature>
<feature type="binding site" evidence="1">
    <location>
        <begin position="155"/>
        <end position="157"/>
    </location>
    <ligand>
        <name>iminosuccinate</name>
        <dbReference type="ChEBI" id="CHEBI:77875"/>
    </ligand>
</feature>
<feature type="binding site" evidence="1">
    <location>
        <position position="172"/>
    </location>
    <ligand>
        <name>iminosuccinate</name>
        <dbReference type="ChEBI" id="CHEBI:77875"/>
    </ligand>
</feature>
<feature type="binding site" evidence="1">
    <location>
        <position position="216"/>
    </location>
    <ligand>
        <name>[4Fe-4S] cluster</name>
        <dbReference type="ChEBI" id="CHEBI:49883"/>
    </ligand>
</feature>
<feature type="binding site" evidence="1">
    <location>
        <begin position="242"/>
        <end position="244"/>
    </location>
    <ligand>
        <name>iminosuccinate</name>
        <dbReference type="ChEBI" id="CHEBI:77875"/>
    </ligand>
</feature>
<feature type="binding site" evidence="1">
    <location>
        <position position="259"/>
    </location>
    <ligand>
        <name>iminosuccinate</name>
        <dbReference type="ChEBI" id="CHEBI:77875"/>
    </ligand>
</feature>
<feature type="binding site" evidence="1">
    <location>
        <position position="313"/>
    </location>
    <ligand>
        <name>[4Fe-4S] cluster</name>
        <dbReference type="ChEBI" id="CHEBI:49883"/>
    </ligand>
</feature>
<reference key="1">
    <citation type="submission" date="2008-05" db="EMBL/GenBank/DDBJ databases">
        <title>Complete sequence of chromosome 1 of Ralstonia pickettii 12J.</title>
        <authorList>
            <person name="Lucas S."/>
            <person name="Copeland A."/>
            <person name="Lapidus A."/>
            <person name="Glavina del Rio T."/>
            <person name="Dalin E."/>
            <person name="Tice H."/>
            <person name="Bruce D."/>
            <person name="Goodwin L."/>
            <person name="Pitluck S."/>
            <person name="Meincke L."/>
            <person name="Brettin T."/>
            <person name="Detter J.C."/>
            <person name="Han C."/>
            <person name="Kuske C.R."/>
            <person name="Schmutz J."/>
            <person name="Larimer F."/>
            <person name="Land M."/>
            <person name="Hauser L."/>
            <person name="Kyrpides N."/>
            <person name="Mikhailova N."/>
            <person name="Marsh T."/>
            <person name="Richardson P."/>
        </authorList>
    </citation>
    <scope>NUCLEOTIDE SEQUENCE [LARGE SCALE GENOMIC DNA]</scope>
    <source>
        <strain>12J</strain>
    </source>
</reference>
<keyword id="KW-0004">4Fe-4S</keyword>
<keyword id="KW-0963">Cytoplasm</keyword>
<keyword id="KW-0408">Iron</keyword>
<keyword id="KW-0411">Iron-sulfur</keyword>
<keyword id="KW-0479">Metal-binding</keyword>
<keyword id="KW-0662">Pyridine nucleotide biosynthesis</keyword>
<keyword id="KW-0808">Transferase</keyword>